<evidence type="ECO:0000250" key="1"/>
<evidence type="ECO:0000255" key="2">
    <source>
        <dbReference type="PROSITE-ProRule" id="PRU00491"/>
    </source>
</evidence>
<evidence type="ECO:0000256" key="3">
    <source>
        <dbReference type="SAM" id="MobiDB-lite"/>
    </source>
</evidence>
<evidence type="ECO:0007744" key="4">
    <source>
    </source>
</evidence>
<dbReference type="EMBL" id="AL035653">
    <property type="status" value="NOT_ANNOTATED_CDS"/>
    <property type="molecule type" value="Genomic_DNA"/>
</dbReference>
<dbReference type="CCDS" id="CCDS47366.1"/>
<dbReference type="RefSeq" id="NP_001138587.1">
    <property type="nucleotide sequence ID" value="NM_001145115.3"/>
</dbReference>
<dbReference type="SMR" id="B7ZBB8"/>
<dbReference type="BioGRID" id="572922">
    <property type="interactions" value="1"/>
</dbReference>
<dbReference type="FunCoup" id="B7ZBB8">
    <property type="interactions" value="3"/>
</dbReference>
<dbReference type="IntAct" id="B7ZBB8">
    <property type="interactions" value="1"/>
</dbReference>
<dbReference type="STRING" id="9606.ENSP00000393832"/>
<dbReference type="GlyGen" id="B7ZBB8">
    <property type="glycosylation" value="1 site"/>
</dbReference>
<dbReference type="iPTMnet" id="B7ZBB8"/>
<dbReference type="PhosphoSitePlus" id="B7ZBB8"/>
<dbReference type="BioMuta" id="PPP1R3G"/>
<dbReference type="jPOST" id="B7ZBB8"/>
<dbReference type="MassIVE" id="B7ZBB8"/>
<dbReference type="PaxDb" id="9606-ENSP00000393832"/>
<dbReference type="PeptideAtlas" id="B7ZBB8"/>
<dbReference type="ProteomicsDB" id="7109"/>
<dbReference type="Antibodypedia" id="58036">
    <property type="antibodies" value="58 antibodies from 12 providers"/>
</dbReference>
<dbReference type="DNASU" id="648791"/>
<dbReference type="Ensembl" id="ENST00000405617.4">
    <property type="protein sequence ID" value="ENSP00000393832.2"/>
    <property type="gene ID" value="ENSG00000219607.4"/>
</dbReference>
<dbReference type="GeneID" id="648791"/>
<dbReference type="KEGG" id="hsa:648791"/>
<dbReference type="MANE-Select" id="ENST00000405617.4">
    <property type="protein sequence ID" value="ENSP00000393832.2"/>
    <property type="RefSeq nucleotide sequence ID" value="NM_001145115.3"/>
    <property type="RefSeq protein sequence ID" value="NP_001138587.1"/>
</dbReference>
<dbReference type="UCSC" id="uc011dia.2">
    <property type="organism name" value="human"/>
</dbReference>
<dbReference type="AGR" id="HGNC:14945"/>
<dbReference type="CTD" id="648791"/>
<dbReference type="DisGeNET" id="648791"/>
<dbReference type="GeneCards" id="PPP1R3G"/>
<dbReference type="HGNC" id="HGNC:14945">
    <property type="gene designation" value="PPP1R3G"/>
</dbReference>
<dbReference type="HPA" id="ENSG00000219607">
    <property type="expression patterns" value="Tissue enhanced (heart muscle, liver)"/>
</dbReference>
<dbReference type="MIM" id="619541">
    <property type="type" value="gene"/>
</dbReference>
<dbReference type="neXtProt" id="NX_B7ZBB8"/>
<dbReference type="OpenTargets" id="ENSG00000219607"/>
<dbReference type="PharmGKB" id="PA33657"/>
<dbReference type="VEuPathDB" id="HostDB:ENSG00000219607"/>
<dbReference type="eggNOG" id="KOG3986">
    <property type="taxonomic scope" value="Eukaryota"/>
</dbReference>
<dbReference type="GeneTree" id="ENSGT00940000163747"/>
<dbReference type="HOGENOM" id="CLU_040215_1_0_1"/>
<dbReference type="InParanoid" id="B7ZBB8"/>
<dbReference type="OMA" id="LQSFPMR"/>
<dbReference type="OrthoDB" id="1881at2759"/>
<dbReference type="PAN-GO" id="B7ZBB8">
    <property type="GO annotations" value="4 GO annotations based on evolutionary models"/>
</dbReference>
<dbReference type="PhylomeDB" id="B7ZBB8"/>
<dbReference type="TreeFam" id="TF105537"/>
<dbReference type="PathwayCommons" id="B7ZBB8"/>
<dbReference type="SignaLink" id="B7ZBB8"/>
<dbReference type="BioGRID-ORCS" id="648791">
    <property type="hits" value="10 hits in 1146 CRISPR screens"/>
</dbReference>
<dbReference type="GenomeRNAi" id="648791"/>
<dbReference type="Pharos" id="B7ZBB8">
    <property type="development level" value="Tbio"/>
</dbReference>
<dbReference type="PRO" id="PR:B7ZBB8"/>
<dbReference type="Proteomes" id="UP000005640">
    <property type="component" value="Chromosome 6"/>
</dbReference>
<dbReference type="RNAct" id="B7ZBB8">
    <property type="molecule type" value="protein"/>
</dbReference>
<dbReference type="Bgee" id="ENSG00000219607">
    <property type="expression patterns" value="Expressed in apex of heart and 88 other cell types or tissues"/>
</dbReference>
<dbReference type="GO" id="GO:0000164">
    <property type="term" value="C:protein phosphatase type 1 complex"/>
    <property type="evidence" value="ECO:0000318"/>
    <property type="project" value="GO_Central"/>
</dbReference>
<dbReference type="GO" id="GO:2001069">
    <property type="term" value="F:glycogen binding"/>
    <property type="evidence" value="ECO:0000318"/>
    <property type="project" value="GO_Central"/>
</dbReference>
<dbReference type="GO" id="GO:0008157">
    <property type="term" value="F:protein phosphatase 1 binding"/>
    <property type="evidence" value="ECO:0000318"/>
    <property type="project" value="GO_Central"/>
</dbReference>
<dbReference type="GO" id="GO:0042593">
    <property type="term" value="P:glucose homeostasis"/>
    <property type="evidence" value="ECO:0007669"/>
    <property type="project" value="Ensembl"/>
</dbReference>
<dbReference type="GO" id="GO:0005978">
    <property type="term" value="P:glycogen biosynthetic process"/>
    <property type="evidence" value="ECO:0007669"/>
    <property type="project" value="Ensembl"/>
</dbReference>
<dbReference type="GO" id="GO:0045725">
    <property type="term" value="P:positive regulation of glycogen biosynthetic process"/>
    <property type="evidence" value="ECO:0007669"/>
    <property type="project" value="Ensembl"/>
</dbReference>
<dbReference type="GO" id="GO:0005979">
    <property type="term" value="P:regulation of glycogen biosynthetic process"/>
    <property type="evidence" value="ECO:0000318"/>
    <property type="project" value="GO_Central"/>
</dbReference>
<dbReference type="Gene3D" id="2.60.40.2440">
    <property type="entry name" value="Carbohydrate binding type-21 domain"/>
    <property type="match status" value="1"/>
</dbReference>
<dbReference type="InterPro" id="IPR005036">
    <property type="entry name" value="CBM21_dom"/>
</dbReference>
<dbReference type="InterPro" id="IPR038175">
    <property type="entry name" value="CBM21_dom_sf"/>
</dbReference>
<dbReference type="InterPro" id="IPR050782">
    <property type="entry name" value="PP1_regulatory_subunit_3"/>
</dbReference>
<dbReference type="PANTHER" id="PTHR12307">
    <property type="entry name" value="PROTEIN PHOSPHATASE 1 REGULATORY SUBUNIT"/>
    <property type="match status" value="1"/>
</dbReference>
<dbReference type="PANTHER" id="PTHR12307:SF7">
    <property type="entry name" value="PROTEIN PHOSPHATASE 1 REGULATORY SUBUNIT 3G"/>
    <property type="match status" value="1"/>
</dbReference>
<dbReference type="Pfam" id="PF03370">
    <property type="entry name" value="CBM_21"/>
    <property type="match status" value="1"/>
</dbReference>
<dbReference type="PROSITE" id="PS51159">
    <property type="entry name" value="CBM21"/>
    <property type="match status" value="1"/>
</dbReference>
<organism>
    <name type="scientific">Homo sapiens</name>
    <name type="common">Human</name>
    <dbReference type="NCBI Taxonomy" id="9606"/>
    <lineage>
        <taxon>Eukaryota</taxon>
        <taxon>Metazoa</taxon>
        <taxon>Chordata</taxon>
        <taxon>Craniata</taxon>
        <taxon>Vertebrata</taxon>
        <taxon>Euteleostomi</taxon>
        <taxon>Mammalia</taxon>
        <taxon>Eutheria</taxon>
        <taxon>Euarchontoglires</taxon>
        <taxon>Primates</taxon>
        <taxon>Haplorrhini</taxon>
        <taxon>Catarrhini</taxon>
        <taxon>Hominidae</taxon>
        <taxon>Homo</taxon>
    </lineage>
</organism>
<comment type="function">
    <text evidence="1">Glycogen-targeting subunit for protein phosphatase 1 (PP1). Involved in the regulation of hepatic glycogenesis in a manner coupled to the fasting-feeding cycle and distinct from other glycogen-targeting subunits (By similarity).</text>
</comment>
<proteinExistence type="evidence at protein level"/>
<name>PP13G_HUMAN</name>
<gene>
    <name type="primary">PPP1R3G</name>
</gene>
<feature type="chain" id="PRO_0000394965" description="Protein phosphatase 1 regulatory subunit 3G">
    <location>
        <begin position="1"/>
        <end position="358"/>
    </location>
</feature>
<feature type="domain" description="CBM21" evidence="2">
    <location>
        <begin position="210"/>
        <end position="350"/>
    </location>
</feature>
<feature type="region of interest" description="Disordered" evidence="3">
    <location>
        <begin position="1"/>
        <end position="71"/>
    </location>
</feature>
<feature type="region of interest" description="Disordered" evidence="3">
    <location>
        <begin position="270"/>
        <end position="295"/>
    </location>
</feature>
<feature type="compositionally biased region" description="Low complexity" evidence="3">
    <location>
        <begin position="11"/>
        <end position="29"/>
    </location>
</feature>
<feature type="compositionally biased region" description="Low complexity" evidence="3">
    <location>
        <begin position="270"/>
        <end position="280"/>
    </location>
</feature>
<feature type="modified residue" description="Phosphoserine" evidence="4">
    <location>
        <position position="86"/>
    </location>
</feature>
<feature type="sequence variant" id="VAR_063262" description="In dbSNP:rs436556.">
    <original>P</original>
    <variation>Q</variation>
    <location>
        <position position="280"/>
    </location>
</feature>
<keyword id="KW-0597">Phosphoprotein</keyword>
<keyword id="KW-1267">Proteomics identification</keyword>
<keyword id="KW-1185">Reference proteome</keyword>
<sequence>MEPIGARLSLEAPGPAPFREAPPAEELPAPVVPCVQGGGDGGGASETPSPDAQLGDRPLSPKEEAAPQEQEELLECRRRCRARSFSLPADPILQAAKFLQQQQQQAVALGGEGAEDAQLGPGGCCAKCKKRVQFADTLGLSLASVKHFSEAEEPQVPPAVLSRLRSFPMRAEDLEQLGGLLAAAAVAAPLSAPPSRLRPLFQLPGPSAAAERLQRQRVCLERVQCSTASGAEVKGSGRVLSCPGPRAVTVRYTFTEWRSFLDVPAELQPEPLEPQQPEAPSGASEPGSGDAKKEPGAECFHFSLCLPPGLQPEDEEDADERGVAVHFAVCYRCAQGEYWDNNAGANYTLRYARPADAL</sequence>
<protein>
    <recommendedName>
        <fullName>Protein phosphatase 1 regulatory subunit 3G</fullName>
    </recommendedName>
</protein>
<reference key="1">
    <citation type="journal article" date="2003" name="Nature">
        <title>The DNA sequence and analysis of human chromosome 6.</title>
        <authorList>
            <person name="Mungall A.J."/>
            <person name="Palmer S.A."/>
            <person name="Sims S.K."/>
            <person name="Edwards C.A."/>
            <person name="Ashurst J.L."/>
            <person name="Wilming L."/>
            <person name="Jones M.C."/>
            <person name="Horton R."/>
            <person name="Hunt S.E."/>
            <person name="Scott C.E."/>
            <person name="Gilbert J.G.R."/>
            <person name="Clamp M.E."/>
            <person name="Bethel G."/>
            <person name="Milne S."/>
            <person name="Ainscough R."/>
            <person name="Almeida J.P."/>
            <person name="Ambrose K.D."/>
            <person name="Andrews T.D."/>
            <person name="Ashwell R.I.S."/>
            <person name="Babbage A.K."/>
            <person name="Bagguley C.L."/>
            <person name="Bailey J."/>
            <person name="Banerjee R."/>
            <person name="Barker D.J."/>
            <person name="Barlow K.F."/>
            <person name="Bates K."/>
            <person name="Beare D.M."/>
            <person name="Beasley H."/>
            <person name="Beasley O."/>
            <person name="Bird C.P."/>
            <person name="Blakey S.E."/>
            <person name="Bray-Allen S."/>
            <person name="Brook J."/>
            <person name="Brown A.J."/>
            <person name="Brown J.Y."/>
            <person name="Burford D.C."/>
            <person name="Burrill W."/>
            <person name="Burton J."/>
            <person name="Carder C."/>
            <person name="Carter N.P."/>
            <person name="Chapman J.C."/>
            <person name="Clark S.Y."/>
            <person name="Clark G."/>
            <person name="Clee C.M."/>
            <person name="Clegg S."/>
            <person name="Cobley V."/>
            <person name="Collier R.E."/>
            <person name="Collins J.E."/>
            <person name="Colman L.K."/>
            <person name="Corby N.R."/>
            <person name="Coville G.J."/>
            <person name="Culley K.M."/>
            <person name="Dhami P."/>
            <person name="Davies J."/>
            <person name="Dunn M."/>
            <person name="Earthrowl M.E."/>
            <person name="Ellington A.E."/>
            <person name="Evans K.A."/>
            <person name="Faulkner L."/>
            <person name="Francis M.D."/>
            <person name="Frankish A."/>
            <person name="Frankland J."/>
            <person name="French L."/>
            <person name="Garner P."/>
            <person name="Garnett J."/>
            <person name="Ghori M.J."/>
            <person name="Gilby L.M."/>
            <person name="Gillson C.J."/>
            <person name="Glithero R.J."/>
            <person name="Grafham D.V."/>
            <person name="Grant M."/>
            <person name="Gribble S."/>
            <person name="Griffiths C."/>
            <person name="Griffiths M.N.D."/>
            <person name="Hall R."/>
            <person name="Halls K.S."/>
            <person name="Hammond S."/>
            <person name="Harley J.L."/>
            <person name="Hart E.A."/>
            <person name="Heath P.D."/>
            <person name="Heathcott R."/>
            <person name="Holmes S.J."/>
            <person name="Howden P.J."/>
            <person name="Howe K.L."/>
            <person name="Howell G.R."/>
            <person name="Huckle E."/>
            <person name="Humphray S.J."/>
            <person name="Humphries M.D."/>
            <person name="Hunt A.R."/>
            <person name="Johnson C.M."/>
            <person name="Joy A.A."/>
            <person name="Kay M."/>
            <person name="Keenan S.J."/>
            <person name="Kimberley A.M."/>
            <person name="King A."/>
            <person name="Laird G.K."/>
            <person name="Langford C."/>
            <person name="Lawlor S."/>
            <person name="Leongamornlert D.A."/>
            <person name="Leversha M."/>
            <person name="Lloyd C.R."/>
            <person name="Lloyd D.M."/>
            <person name="Loveland J.E."/>
            <person name="Lovell J."/>
            <person name="Martin S."/>
            <person name="Mashreghi-Mohammadi M."/>
            <person name="Maslen G.L."/>
            <person name="Matthews L."/>
            <person name="McCann O.T."/>
            <person name="McLaren S.J."/>
            <person name="McLay K."/>
            <person name="McMurray A."/>
            <person name="Moore M.J.F."/>
            <person name="Mullikin J.C."/>
            <person name="Niblett D."/>
            <person name="Nickerson T."/>
            <person name="Novik K.L."/>
            <person name="Oliver K."/>
            <person name="Overton-Larty E.K."/>
            <person name="Parker A."/>
            <person name="Patel R."/>
            <person name="Pearce A.V."/>
            <person name="Peck A.I."/>
            <person name="Phillimore B.J.C.T."/>
            <person name="Phillips S."/>
            <person name="Plumb R.W."/>
            <person name="Porter K.M."/>
            <person name="Ramsey Y."/>
            <person name="Ranby S.A."/>
            <person name="Rice C.M."/>
            <person name="Ross M.T."/>
            <person name="Searle S.M."/>
            <person name="Sehra H.K."/>
            <person name="Sheridan E."/>
            <person name="Skuce C.D."/>
            <person name="Smith S."/>
            <person name="Smith M."/>
            <person name="Spraggon L."/>
            <person name="Squares S.L."/>
            <person name="Steward C.A."/>
            <person name="Sycamore N."/>
            <person name="Tamlyn-Hall G."/>
            <person name="Tester J."/>
            <person name="Theaker A.J."/>
            <person name="Thomas D.W."/>
            <person name="Thorpe A."/>
            <person name="Tracey A."/>
            <person name="Tromans A."/>
            <person name="Tubby B."/>
            <person name="Wall M."/>
            <person name="Wallis J.M."/>
            <person name="West A.P."/>
            <person name="White S.S."/>
            <person name="Whitehead S.L."/>
            <person name="Whittaker H."/>
            <person name="Wild A."/>
            <person name="Willey D.J."/>
            <person name="Wilmer T.E."/>
            <person name="Wood J.M."/>
            <person name="Wray P.W."/>
            <person name="Wyatt J.C."/>
            <person name="Young L."/>
            <person name="Younger R.M."/>
            <person name="Bentley D.R."/>
            <person name="Coulson A."/>
            <person name="Durbin R.M."/>
            <person name="Hubbard T."/>
            <person name="Sulston J.E."/>
            <person name="Dunham I."/>
            <person name="Rogers J."/>
            <person name="Beck S."/>
        </authorList>
    </citation>
    <scope>NUCLEOTIDE SEQUENCE [LARGE SCALE GENOMIC DNA]</scope>
</reference>
<reference key="2">
    <citation type="journal article" date="2002" name="Bioessays">
        <title>Regulator-driven functional diversification of protein phosphatase-1 in eukaryotic evolution.</title>
        <authorList>
            <person name="Ceulemans H."/>
            <person name="Stalmans W."/>
            <person name="Bollen M."/>
        </authorList>
    </citation>
    <scope>IDENTIFICATION</scope>
</reference>
<reference key="3">
    <citation type="journal article" date="2014" name="J. Proteomics">
        <title>An enzyme assisted RP-RPLC approach for in-depth analysis of human liver phosphoproteome.</title>
        <authorList>
            <person name="Bian Y."/>
            <person name="Song C."/>
            <person name="Cheng K."/>
            <person name="Dong M."/>
            <person name="Wang F."/>
            <person name="Huang J."/>
            <person name="Sun D."/>
            <person name="Wang L."/>
            <person name="Ye M."/>
            <person name="Zou H."/>
        </authorList>
    </citation>
    <scope>PHOSPHORYLATION [LARGE SCALE ANALYSIS] AT SER-86</scope>
    <scope>IDENTIFICATION BY MASS SPECTROMETRY [LARGE SCALE ANALYSIS]</scope>
    <source>
        <tissue>Liver</tissue>
    </source>
</reference>
<accession>B7ZBB8</accession>